<organism>
    <name type="scientific">Anaeromyxobacter dehalogenans (strain 2CP-1 / ATCC BAA-258)</name>
    <dbReference type="NCBI Taxonomy" id="455488"/>
    <lineage>
        <taxon>Bacteria</taxon>
        <taxon>Pseudomonadati</taxon>
        <taxon>Myxococcota</taxon>
        <taxon>Myxococcia</taxon>
        <taxon>Myxococcales</taxon>
        <taxon>Cystobacterineae</taxon>
        <taxon>Anaeromyxobacteraceae</taxon>
        <taxon>Anaeromyxobacter</taxon>
    </lineage>
</organism>
<keyword id="KW-0067">ATP-binding</keyword>
<keyword id="KW-0460">Magnesium</keyword>
<keyword id="KW-0547">Nucleotide-binding</keyword>
<keyword id="KW-0808">Transferase</keyword>
<keyword id="KW-0819">tRNA processing</keyword>
<gene>
    <name evidence="1" type="primary">miaA</name>
    <name type="ordered locus">A2cp1_2443</name>
</gene>
<comment type="function">
    <text evidence="1">Catalyzes the transfer of a dimethylallyl group onto the adenine at position 37 in tRNAs that read codons beginning with uridine, leading to the formation of N6-(dimethylallyl)adenosine (i(6)A).</text>
</comment>
<comment type="catalytic activity">
    <reaction evidence="1">
        <text>adenosine(37) in tRNA + dimethylallyl diphosphate = N(6)-dimethylallyladenosine(37) in tRNA + diphosphate</text>
        <dbReference type="Rhea" id="RHEA:26482"/>
        <dbReference type="Rhea" id="RHEA-COMP:10162"/>
        <dbReference type="Rhea" id="RHEA-COMP:10375"/>
        <dbReference type="ChEBI" id="CHEBI:33019"/>
        <dbReference type="ChEBI" id="CHEBI:57623"/>
        <dbReference type="ChEBI" id="CHEBI:74411"/>
        <dbReference type="ChEBI" id="CHEBI:74415"/>
        <dbReference type="EC" id="2.5.1.75"/>
    </reaction>
</comment>
<comment type="cofactor">
    <cofactor evidence="1">
        <name>Mg(2+)</name>
        <dbReference type="ChEBI" id="CHEBI:18420"/>
    </cofactor>
</comment>
<comment type="subunit">
    <text evidence="1">Monomer.</text>
</comment>
<comment type="similarity">
    <text evidence="1">Belongs to the IPP transferase family.</text>
</comment>
<evidence type="ECO:0000255" key="1">
    <source>
        <dbReference type="HAMAP-Rule" id="MF_00185"/>
    </source>
</evidence>
<dbReference type="EC" id="2.5.1.75" evidence="1"/>
<dbReference type="EMBL" id="CP001359">
    <property type="protein sequence ID" value="ACL65781.1"/>
    <property type="molecule type" value="Genomic_DNA"/>
</dbReference>
<dbReference type="RefSeq" id="WP_012633582.1">
    <property type="nucleotide sequence ID" value="NC_011891.1"/>
</dbReference>
<dbReference type="SMR" id="B8JBF4"/>
<dbReference type="KEGG" id="acp:A2cp1_2443"/>
<dbReference type="HOGENOM" id="CLU_032616_0_1_7"/>
<dbReference type="Proteomes" id="UP000007089">
    <property type="component" value="Chromosome"/>
</dbReference>
<dbReference type="GO" id="GO:0005524">
    <property type="term" value="F:ATP binding"/>
    <property type="evidence" value="ECO:0007669"/>
    <property type="project" value="UniProtKB-UniRule"/>
</dbReference>
<dbReference type="GO" id="GO:0052381">
    <property type="term" value="F:tRNA dimethylallyltransferase activity"/>
    <property type="evidence" value="ECO:0007669"/>
    <property type="project" value="UniProtKB-UniRule"/>
</dbReference>
<dbReference type="GO" id="GO:0006400">
    <property type="term" value="P:tRNA modification"/>
    <property type="evidence" value="ECO:0007669"/>
    <property type="project" value="TreeGrafter"/>
</dbReference>
<dbReference type="Gene3D" id="1.10.20.140">
    <property type="match status" value="1"/>
</dbReference>
<dbReference type="Gene3D" id="3.40.50.300">
    <property type="entry name" value="P-loop containing nucleotide triphosphate hydrolases"/>
    <property type="match status" value="1"/>
</dbReference>
<dbReference type="HAMAP" id="MF_00185">
    <property type="entry name" value="IPP_trans"/>
    <property type="match status" value="1"/>
</dbReference>
<dbReference type="InterPro" id="IPR039657">
    <property type="entry name" value="Dimethylallyltransferase"/>
</dbReference>
<dbReference type="InterPro" id="IPR018022">
    <property type="entry name" value="IPT"/>
</dbReference>
<dbReference type="InterPro" id="IPR027417">
    <property type="entry name" value="P-loop_NTPase"/>
</dbReference>
<dbReference type="NCBIfam" id="TIGR00174">
    <property type="entry name" value="miaA"/>
    <property type="match status" value="1"/>
</dbReference>
<dbReference type="PANTHER" id="PTHR11088">
    <property type="entry name" value="TRNA DIMETHYLALLYLTRANSFERASE"/>
    <property type="match status" value="1"/>
</dbReference>
<dbReference type="PANTHER" id="PTHR11088:SF60">
    <property type="entry name" value="TRNA DIMETHYLALLYLTRANSFERASE"/>
    <property type="match status" value="1"/>
</dbReference>
<dbReference type="Pfam" id="PF01715">
    <property type="entry name" value="IPPT"/>
    <property type="match status" value="1"/>
</dbReference>
<dbReference type="SUPFAM" id="SSF52540">
    <property type="entry name" value="P-loop containing nucleoside triphosphate hydrolases"/>
    <property type="match status" value="2"/>
</dbReference>
<name>MIAA_ANAD2</name>
<protein>
    <recommendedName>
        <fullName evidence="1">tRNA dimethylallyltransferase</fullName>
        <ecNumber evidence="1">2.5.1.75</ecNumber>
    </recommendedName>
    <alternativeName>
        <fullName evidence="1">Dimethylallyl diphosphate:tRNA dimethylallyltransferase</fullName>
        <shortName evidence="1">DMAPP:tRNA dimethylallyltransferase</shortName>
        <shortName evidence="1">DMATase</shortName>
    </alternativeName>
    <alternativeName>
        <fullName evidence="1">Isopentenyl-diphosphate:tRNA isopentenyltransferase</fullName>
        <shortName evidence="1">IPP transferase</shortName>
        <shortName evidence="1">IPPT</shortName>
        <shortName evidence="1">IPTase</shortName>
    </alternativeName>
</protein>
<accession>B8JBF4</accession>
<reference key="1">
    <citation type="submission" date="2009-01" db="EMBL/GenBank/DDBJ databases">
        <title>Complete sequence of Anaeromyxobacter dehalogenans 2CP-1.</title>
        <authorList>
            <person name="Lucas S."/>
            <person name="Copeland A."/>
            <person name="Lapidus A."/>
            <person name="Glavina del Rio T."/>
            <person name="Dalin E."/>
            <person name="Tice H."/>
            <person name="Bruce D."/>
            <person name="Goodwin L."/>
            <person name="Pitluck S."/>
            <person name="Saunders E."/>
            <person name="Brettin T."/>
            <person name="Detter J.C."/>
            <person name="Han C."/>
            <person name="Larimer F."/>
            <person name="Land M."/>
            <person name="Hauser L."/>
            <person name="Kyrpides N."/>
            <person name="Ovchinnikova G."/>
            <person name="Beliaev A.S."/>
            <person name="Richardson P."/>
        </authorList>
    </citation>
    <scope>NUCLEOTIDE SEQUENCE [LARGE SCALE GENOMIC DNA]</scope>
    <source>
        <strain>2CP-1 / ATCC BAA-258</strain>
    </source>
</reference>
<feature type="chain" id="PRO_0000377061" description="tRNA dimethylallyltransferase">
    <location>
        <begin position="1"/>
        <end position="305"/>
    </location>
</feature>
<feature type="region of interest" description="Interaction with substrate tRNA" evidence="1">
    <location>
        <begin position="33"/>
        <end position="36"/>
    </location>
</feature>
<feature type="binding site" evidence="1">
    <location>
        <begin position="8"/>
        <end position="15"/>
    </location>
    <ligand>
        <name>ATP</name>
        <dbReference type="ChEBI" id="CHEBI:30616"/>
    </ligand>
</feature>
<feature type="binding site" evidence="1">
    <location>
        <begin position="10"/>
        <end position="15"/>
    </location>
    <ligand>
        <name>substrate</name>
    </ligand>
</feature>
<feature type="site" description="Interaction with substrate tRNA" evidence="1">
    <location>
        <position position="99"/>
    </location>
</feature>
<feature type="site" description="Interaction with substrate tRNA" evidence="1">
    <location>
        <position position="121"/>
    </location>
</feature>
<sequence length="305" mass="32708">MRLVVVAGPTASGKTALAIALARRLGGEIVNADSQQVYRGLDVGTAKPTAEERGAAPHHLLDLVEPGEGMDAARFAALADAAIAGIAARGRVPIVAGGTGLYVRALLHGVVEAPGRDPALRAALEEEAARLGRPAVHARLAAVDPAAAERIRPNDLVRVVRALEIAAGGRTPSELYQAHAFREDRYDAALLALDPPRAELHARIDARVRAMFAGGLLDEARALEARFVGALPARLPIGYAEAAAHLRGELDLEEAIRRVQVAHRRYARRQVIWLRRERGVAWIAPPHDVEALSRRVLEPRPPAIR</sequence>
<proteinExistence type="inferred from homology"/>